<evidence type="ECO:0000255" key="1">
    <source>
        <dbReference type="HAMAP-Rule" id="MF_01321"/>
    </source>
</evidence>
<reference key="1">
    <citation type="submission" date="2007-02" db="EMBL/GenBank/DDBJ databases">
        <title>Complete sequence of plasmid pSbal03 of Shewanella baltica OS155.</title>
        <authorList>
            <consortium name="US DOE Joint Genome Institute"/>
            <person name="Copeland A."/>
            <person name="Lucas S."/>
            <person name="Lapidus A."/>
            <person name="Barry K."/>
            <person name="Detter J.C."/>
            <person name="Glavina del Rio T."/>
            <person name="Hammon N."/>
            <person name="Israni S."/>
            <person name="Dalin E."/>
            <person name="Tice H."/>
            <person name="Pitluck S."/>
            <person name="Sims D.R."/>
            <person name="Brettin T."/>
            <person name="Bruce D."/>
            <person name="Han C."/>
            <person name="Tapia R."/>
            <person name="Brainard J."/>
            <person name="Schmutz J."/>
            <person name="Larimer F."/>
            <person name="Land M."/>
            <person name="Hauser L."/>
            <person name="Kyrpides N."/>
            <person name="Mikhailova N."/>
            <person name="Brettar I."/>
            <person name="Klappenbach J."/>
            <person name="Konstantinidis K."/>
            <person name="Rodrigues J."/>
            <person name="Tiedje J."/>
            <person name="Richardson P."/>
        </authorList>
    </citation>
    <scope>NUCLEOTIDE SEQUENCE [LARGE SCALE GENOMIC DNA]</scope>
    <source>
        <strain>OS155 / ATCC BAA-1091</strain>
    </source>
</reference>
<gene>
    <name evidence="1" type="primary">rpoB</name>
    <name type="ordered locus">Sbal_4463</name>
</gene>
<comment type="function">
    <text evidence="1">DNA-dependent RNA polymerase catalyzes the transcription of DNA into RNA using the four ribonucleoside triphosphates as substrates.</text>
</comment>
<comment type="catalytic activity">
    <reaction evidence="1">
        <text>RNA(n) + a ribonucleoside 5'-triphosphate = RNA(n+1) + diphosphate</text>
        <dbReference type="Rhea" id="RHEA:21248"/>
        <dbReference type="Rhea" id="RHEA-COMP:14527"/>
        <dbReference type="Rhea" id="RHEA-COMP:17342"/>
        <dbReference type="ChEBI" id="CHEBI:33019"/>
        <dbReference type="ChEBI" id="CHEBI:61557"/>
        <dbReference type="ChEBI" id="CHEBI:140395"/>
        <dbReference type="EC" id="2.7.7.6"/>
    </reaction>
</comment>
<comment type="subunit">
    <text evidence="1">The RNAP catalytic core consists of 2 alpha, 1 beta, 1 beta' and 1 omega subunit. When a sigma factor is associated with the core the holoenzyme is formed, which can initiate transcription.</text>
</comment>
<comment type="similarity">
    <text evidence="1">Belongs to the RNA polymerase beta chain family.</text>
</comment>
<name>RPOB_SHEB5</name>
<dbReference type="EC" id="2.7.7.6" evidence="1"/>
<dbReference type="EMBL" id="CP000566">
    <property type="protein sequence ID" value="ABN64008.1"/>
    <property type="molecule type" value="Genomic_DNA"/>
</dbReference>
<dbReference type="RefSeq" id="WP_006083607.1">
    <property type="nucleotide sequence ID" value="NC_009037.1"/>
</dbReference>
<dbReference type="SMR" id="A3DB95"/>
<dbReference type="GeneID" id="11770553"/>
<dbReference type="KEGG" id="sbl:Sbal_4463"/>
<dbReference type="HOGENOM" id="CLU_000524_4_0_6"/>
<dbReference type="OrthoDB" id="9803954at2"/>
<dbReference type="Proteomes" id="UP000001557">
    <property type="component" value="Plasmid pSbal03"/>
</dbReference>
<dbReference type="GO" id="GO:0000428">
    <property type="term" value="C:DNA-directed RNA polymerase complex"/>
    <property type="evidence" value="ECO:0007669"/>
    <property type="project" value="UniProtKB-KW"/>
</dbReference>
<dbReference type="GO" id="GO:0003677">
    <property type="term" value="F:DNA binding"/>
    <property type="evidence" value="ECO:0007669"/>
    <property type="project" value="UniProtKB-UniRule"/>
</dbReference>
<dbReference type="GO" id="GO:0003899">
    <property type="term" value="F:DNA-directed RNA polymerase activity"/>
    <property type="evidence" value="ECO:0007669"/>
    <property type="project" value="UniProtKB-UniRule"/>
</dbReference>
<dbReference type="GO" id="GO:0032549">
    <property type="term" value="F:ribonucleoside binding"/>
    <property type="evidence" value="ECO:0007669"/>
    <property type="project" value="InterPro"/>
</dbReference>
<dbReference type="GO" id="GO:0006351">
    <property type="term" value="P:DNA-templated transcription"/>
    <property type="evidence" value="ECO:0007669"/>
    <property type="project" value="UniProtKB-UniRule"/>
</dbReference>
<dbReference type="CDD" id="cd00653">
    <property type="entry name" value="RNA_pol_B_RPB2"/>
    <property type="match status" value="1"/>
</dbReference>
<dbReference type="FunFam" id="2.40.270.10:FF:000003">
    <property type="entry name" value="DNA-directed RNA polymerase subunit beta"/>
    <property type="match status" value="1"/>
</dbReference>
<dbReference type="FunFam" id="2.40.270.10:FF:000004">
    <property type="entry name" value="DNA-directed RNA polymerase subunit beta"/>
    <property type="match status" value="1"/>
</dbReference>
<dbReference type="FunFam" id="2.40.50.100:FF:000006">
    <property type="entry name" value="DNA-directed RNA polymerase subunit beta"/>
    <property type="match status" value="1"/>
</dbReference>
<dbReference type="FunFam" id="2.40.50.150:FF:000001">
    <property type="entry name" value="DNA-directed RNA polymerase subunit beta"/>
    <property type="match status" value="1"/>
</dbReference>
<dbReference type="FunFam" id="3.90.1100.10:FF:000002">
    <property type="entry name" value="DNA-directed RNA polymerase subunit beta"/>
    <property type="match status" value="1"/>
</dbReference>
<dbReference type="FunFam" id="3.90.1110.10:FF:000001">
    <property type="entry name" value="DNA-directed RNA polymerase subunit beta"/>
    <property type="match status" value="1"/>
</dbReference>
<dbReference type="FunFam" id="3.90.1110.10:FF:000004">
    <property type="entry name" value="DNA-directed RNA polymerase subunit beta"/>
    <property type="match status" value="1"/>
</dbReference>
<dbReference type="FunFam" id="3.90.1800.10:FF:000001">
    <property type="entry name" value="DNA-directed RNA polymerase subunit beta"/>
    <property type="match status" value="1"/>
</dbReference>
<dbReference type="Gene3D" id="2.40.50.100">
    <property type="match status" value="1"/>
</dbReference>
<dbReference type="Gene3D" id="2.40.50.150">
    <property type="match status" value="1"/>
</dbReference>
<dbReference type="Gene3D" id="3.90.1100.10">
    <property type="match status" value="3"/>
</dbReference>
<dbReference type="Gene3D" id="2.40.270.10">
    <property type="entry name" value="DNA-directed RNA polymerase, subunit 2, domain 6"/>
    <property type="match status" value="1"/>
</dbReference>
<dbReference type="Gene3D" id="3.90.1800.10">
    <property type="entry name" value="RNA polymerase alpha subunit dimerisation domain"/>
    <property type="match status" value="1"/>
</dbReference>
<dbReference type="Gene3D" id="3.90.1110.10">
    <property type="entry name" value="RNA polymerase Rpb2, domain 2"/>
    <property type="match status" value="1"/>
</dbReference>
<dbReference type="HAMAP" id="MF_01321">
    <property type="entry name" value="RNApol_bact_RpoB"/>
    <property type="match status" value="1"/>
</dbReference>
<dbReference type="InterPro" id="IPR019462">
    <property type="entry name" value="DNA-dir_RNA_pol_bsu_external_1"/>
</dbReference>
<dbReference type="InterPro" id="IPR015712">
    <property type="entry name" value="DNA-dir_RNA_pol_su2"/>
</dbReference>
<dbReference type="InterPro" id="IPR007120">
    <property type="entry name" value="DNA-dir_RNAP_su2_dom"/>
</dbReference>
<dbReference type="InterPro" id="IPR037033">
    <property type="entry name" value="DNA-dir_RNAP_su2_hyb_sf"/>
</dbReference>
<dbReference type="InterPro" id="IPR010243">
    <property type="entry name" value="RNA_pol_bsu_bac"/>
</dbReference>
<dbReference type="InterPro" id="IPR007121">
    <property type="entry name" value="RNA_pol_bsu_CS"/>
</dbReference>
<dbReference type="InterPro" id="IPR007644">
    <property type="entry name" value="RNA_pol_bsu_protrusion"/>
</dbReference>
<dbReference type="InterPro" id="IPR007642">
    <property type="entry name" value="RNA_pol_Rpb2_2"/>
</dbReference>
<dbReference type="InterPro" id="IPR037034">
    <property type="entry name" value="RNA_pol_Rpb2_2_sf"/>
</dbReference>
<dbReference type="InterPro" id="IPR007645">
    <property type="entry name" value="RNA_pol_Rpb2_3"/>
</dbReference>
<dbReference type="InterPro" id="IPR007641">
    <property type="entry name" value="RNA_pol_Rpb2_7"/>
</dbReference>
<dbReference type="InterPro" id="IPR014724">
    <property type="entry name" value="RNA_pol_RPB2_OB-fold"/>
</dbReference>
<dbReference type="NCBIfam" id="NF001616">
    <property type="entry name" value="PRK00405.1"/>
    <property type="match status" value="1"/>
</dbReference>
<dbReference type="NCBIfam" id="TIGR02013">
    <property type="entry name" value="rpoB"/>
    <property type="match status" value="1"/>
</dbReference>
<dbReference type="PANTHER" id="PTHR20856">
    <property type="entry name" value="DNA-DIRECTED RNA POLYMERASE I SUBUNIT 2"/>
    <property type="match status" value="1"/>
</dbReference>
<dbReference type="Pfam" id="PF04563">
    <property type="entry name" value="RNA_pol_Rpb2_1"/>
    <property type="match status" value="1"/>
</dbReference>
<dbReference type="Pfam" id="PF04561">
    <property type="entry name" value="RNA_pol_Rpb2_2"/>
    <property type="match status" value="2"/>
</dbReference>
<dbReference type="Pfam" id="PF04565">
    <property type="entry name" value="RNA_pol_Rpb2_3"/>
    <property type="match status" value="1"/>
</dbReference>
<dbReference type="Pfam" id="PF10385">
    <property type="entry name" value="RNA_pol_Rpb2_45"/>
    <property type="match status" value="1"/>
</dbReference>
<dbReference type="Pfam" id="PF00562">
    <property type="entry name" value="RNA_pol_Rpb2_6"/>
    <property type="match status" value="1"/>
</dbReference>
<dbReference type="Pfam" id="PF04560">
    <property type="entry name" value="RNA_pol_Rpb2_7"/>
    <property type="match status" value="1"/>
</dbReference>
<dbReference type="SUPFAM" id="SSF64484">
    <property type="entry name" value="beta and beta-prime subunits of DNA dependent RNA-polymerase"/>
    <property type="match status" value="1"/>
</dbReference>
<dbReference type="PROSITE" id="PS01166">
    <property type="entry name" value="RNA_POL_BETA"/>
    <property type="match status" value="1"/>
</dbReference>
<protein>
    <recommendedName>
        <fullName evidence="1">DNA-directed RNA polymerase subunit beta</fullName>
        <shortName evidence="1">RNAP subunit beta</shortName>
        <ecNumber evidence="1">2.7.7.6</ecNumber>
    </recommendedName>
    <alternativeName>
        <fullName evidence="1">RNA polymerase subunit beta</fullName>
    </alternativeName>
    <alternativeName>
        <fullName evidence="1">Transcriptase subunit beta</fullName>
    </alternativeName>
</protein>
<feature type="chain" id="PRO_0000329188" description="DNA-directed RNA polymerase subunit beta">
    <location>
        <begin position="1"/>
        <end position="1343"/>
    </location>
</feature>
<proteinExistence type="inferred from homology"/>
<accession>A3DB95</accession>
<keyword id="KW-0240">DNA-directed RNA polymerase</keyword>
<keyword id="KW-0548">Nucleotidyltransferase</keyword>
<keyword id="KW-0614">Plasmid</keyword>
<keyword id="KW-1185">Reference proteome</keyword>
<keyword id="KW-0804">Transcription</keyword>
<keyword id="KW-0808">Transferase</keyword>
<geneLocation type="plasmid">
    <name>pSbal03</name>
</geneLocation>
<organism>
    <name type="scientific">Shewanella baltica (strain OS155 / ATCC BAA-1091)</name>
    <dbReference type="NCBI Taxonomy" id="325240"/>
    <lineage>
        <taxon>Bacteria</taxon>
        <taxon>Pseudomonadati</taxon>
        <taxon>Pseudomonadota</taxon>
        <taxon>Gammaproteobacteria</taxon>
        <taxon>Alteromonadales</taxon>
        <taxon>Shewanellaceae</taxon>
        <taxon>Shewanella</taxon>
    </lineage>
</organism>
<sequence length="1343" mass="150034">MVYSYSEKKRIRKDFGKRPKVLDIPYLLSIQLDSFKKFTDQDPTGERGLEAAFRSVFPIKSFSGNSELQYVSYKLGEPVFDVKECQIRGVTYSAPLRVKLRMVLYDREAAAGTVKDIKEQEVYMGDIPLMTDNGTFVINGTERVIVSQLHRSPGVFFDHDRGKTHSSGKVLYNARIIPYRGSWLDFEFDPKDALFVRIDRRRKLPATIMLRALEYSTQEILDLFFERVEFKIKKDTLVMALVPERLRGETASYDIKDAEGSVLVEAGRRITARHIRQLEKTNTTELEVPVEYIVGKYAAQDYIDPDTGEVLVSANSEISLEDLAKLSLAGIKELSTLYINELDHGAYISDTLRIDSTTNRLEALVEIYRMMRPGEPPTKDAAEALFQNLFFSEERYDLSKVGRMKFNRRLSIPDDEGSGVLSKEDIVAVMKNIIHIRNGFDEVDDIDHLGNRRIRSVGEMAENQFRVGLVRVERAVRERLSLGDLNELMPQDLINAKPISAAVKEFFGSSQLSQFMDQNNPLSEVTHKRRISALGPGGLTRERAGFEVRDVHPTHYGRLCPIETPEGPNIGLINSLASFARTNSYGFLETPYRKVIDGVITDEVEYLSAIEEGRYVIAQANIEIDANGRMAEEQIACRHKGESTFMRAADIQYMDVSPQQIISVAASLIPFLEHDDANRALMGANMQRQAVPTLRSEKPLVGTGIERTLAVDSGVVVVAKRGGFVDYVDASRIVVKVNEDELRPGEAGIDIYNLTKYTRSNQNTCINQRPCCSVGEPVVRGDVLADGPSTDLGDLALGQNMRIAFMPWNGYNFEDSILISERVAQEDRFTTIHIQELSCIARDTKLGSEEITADIPNVGESALSKLDESGIVYIGAEVKGGDILVGKVTPKGETQLTPEEKLLRAIFGEKASDVKDSSLRVPNSVKGTIIDVQVFTRDGVEKDKRAVEIEEMHIAQARKDLGEEFKILEEGVLSRARNLLIGAGFTDAQIAALPRKDVLIQVIDDETKQTELEQLAEQHEELKADFDKKFEIKRRKITQGDDLAPGVLKIVKVYLAVKRTIQPGDKMAGRHGNKGVISKICPIEDMPYDEQGNPVDIVLNPLGVPSRMNIGQVLEVHMGAAAKGIGNKITAMLEEQRELAEVRGYIKQVYELGDEVQQRVDIDSFTDDEVLRLATNLKGGIPIATPAFDGAKEKEIKQMLELAGLPTSGQLKLFDGRTGNEFERQVTVGYMYMLKLNHLVDDKMHARSTGSYSLVTQQPLGGKAQFGGQRFGEMEVWALEAYGAAYTLQEMLTVKSDDVNGRTQMYKNIVDGNHQMQPGMPESFNVLLKEIRSLGINIELDQA</sequence>